<proteinExistence type="inferred from homology"/>
<organism>
    <name type="scientific">Proteus mirabilis (strain HI4320)</name>
    <dbReference type="NCBI Taxonomy" id="529507"/>
    <lineage>
        <taxon>Bacteria</taxon>
        <taxon>Pseudomonadati</taxon>
        <taxon>Pseudomonadota</taxon>
        <taxon>Gammaproteobacteria</taxon>
        <taxon>Enterobacterales</taxon>
        <taxon>Morganellaceae</taxon>
        <taxon>Proteus</taxon>
    </lineage>
</organism>
<accession>B4F2M1</accession>
<feature type="chain" id="PRO_1000088832" description="Aspartate carbamoyltransferase regulatory chain">
    <location>
        <begin position="1"/>
        <end position="152"/>
    </location>
</feature>
<feature type="binding site" evidence="1">
    <location>
        <position position="109"/>
    </location>
    <ligand>
        <name>Zn(2+)</name>
        <dbReference type="ChEBI" id="CHEBI:29105"/>
    </ligand>
</feature>
<feature type="binding site" evidence="1">
    <location>
        <position position="114"/>
    </location>
    <ligand>
        <name>Zn(2+)</name>
        <dbReference type="ChEBI" id="CHEBI:29105"/>
    </ligand>
</feature>
<feature type="binding site" evidence="1">
    <location>
        <position position="138"/>
    </location>
    <ligand>
        <name>Zn(2+)</name>
        <dbReference type="ChEBI" id="CHEBI:29105"/>
    </ligand>
</feature>
<feature type="binding site" evidence="1">
    <location>
        <position position="141"/>
    </location>
    <ligand>
        <name>Zn(2+)</name>
        <dbReference type="ChEBI" id="CHEBI:29105"/>
    </ligand>
</feature>
<reference key="1">
    <citation type="journal article" date="2008" name="J. Bacteriol.">
        <title>Complete genome sequence of uropathogenic Proteus mirabilis, a master of both adherence and motility.</title>
        <authorList>
            <person name="Pearson M.M."/>
            <person name="Sebaihia M."/>
            <person name="Churcher C."/>
            <person name="Quail M.A."/>
            <person name="Seshasayee A.S."/>
            <person name="Luscombe N.M."/>
            <person name="Abdellah Z."/>
            <person name="Arrosmith C."/>
            <person name="Atkin B."/>
            <person name="Chillingworth T."/>
            <person name="Hauser H."/>
            <person name="Jagels K."/>
            <person name="Moule S."/>
            <person name="Mungall K."/>
            <person name="Norbertczak H."/>
            <person name="Rabbinowitsch E."/>
            <person name="Walker D."/>
            <person name="Whithead S."/>
            <person name="Thomson N.R."/>
            <person name="Rather P.N."/>
            <person name="Parkhill J."/>
            <person name="Mobley H.L.T."/>
        </authorList>
    </citation>
    <scope>NUCLEOTIDE SEQUENCE [LARGE SCALE GENOMIC DNA]</scope>
    <source>
        <strain>HI4320</strain>
    </source>
</reference>
<sequence length="152" mass="17239">MTHDHKLKVEAIKRGTVIDHIPAQVGFKILSLFRLTETDERITVGFNLPSENLGKKDLIKIENVFLTAEQANRLAMYAPQATVNIIDDYQVVNKMALSLPELLEDVVPCPNSNCISHNEPVQSSFRVKKFASDVVLTCKYCEKEFERHAVIR</sequence>
<dbReference type="EMBL" id="AM942759">
    <property type="protein sequence ID" value="CAR46768.1"/>
    <property type="molecule type" value="Genomic_DNA"/>
</dbReference>
<dbReference type="RefSeq" id="WP_004246198.1">
    <property type="nucleotide sequence ID" value="NC_010554.1"/>
</dbReference>
<dbReference type="SMR" id="B4F2M1"/>
<dbReference type="EnsemblBacteria" id="CAR46768">
    <property type="protein sequence ID" value="CAR46768"/>
    <property type="gene ID" value="PMI3454"/>
</dbReference>
<dbReference type="GeneID" id="6802425"/>
<dbReference type="KEGG" id="pmr:PMI3454"/>
<dbReference type="eggNOG" id="COG1781">
    <property type="taxonomic scope" value="Bacteria"/>
</dbReference>
<dbReference type="HOGENOM" id="CLU_128576_0_0_6"/>
<dbReference type="Proteomes" id="UP000008319">
    <property type="component" value="Chromosome"/>
</dbReference>
<dbReference type="GO" id="GO:0009347">
    <property type="term" value="C:aspartate carbamoyltransferase complex"/>
    <property type="evidence" value="ECO:0007669"/>
    <property type="project" value="InterPro"/>
</dbReference>
<dbReference type="GO" id="GO:0046872">
    <property type="term" value="F:metal ion binding"/>
    <property type="evidence" value="ECO:0007669"/>
    <property type="project" value="UniProtKB-KW"/>
</dbReference>
<dbReference type="GO" id="GO:0006207">
    <property type="term" value="P:'de novo' pyrimidine nucleobase biosynthetic process"/>
    <property type="evidence" value="ECO:0007669"/>
    <property type="project" value="InterPro"/>
</dbReference>
<dbReference type="GO" id="GO:0006221">
    <property type="term" value="P:pyrimidine nucleotide biosynthetic process"/>
    <property type="evidence" value="ECO:0007669"/>
    <property type="project" value="UniProtKB-UniRule"/>
</dbReference>
<dbReference type="Gene3D" id="2.30.30.20">
    <property type="entry name" value="Aspartate carbamoyltransferase regulatory subunit, C-terminal domain"/>
    <property type="match status" value="1"/>
</dbReference>
<dbReference type="Gene3D" id="3.30.70.140">
    <property type="entry name" value="Aspartate carbamoyltransferase regulatory subunit, N-terminal domain"/>
    <property type="match status" value="1"/>
</dbReference>
<dbReference type="HAMAP" id="MF_00002">
    <property type="entry name" value="Asp_carb_tr_reg"/>
    <property type="match status" value="1"/>
</dbReference>
<dbReference type="InterPro" id="IPR020545">
    <property type="entry name" value="Asp_carbamoyltransf_reg_N"/>
</dbReference>
<dbReference type="InterPro" id="IPR002801">
    <property type="entry name" value="Asp_carbamoylTrfase_reg"/>
</dbReference>
<dbReference type="InterPro" id="IPR020542">
    <property type="entry name" value="Asp_carbamoyltrfase_reg_C"/>
</dbReference>
<dbReference type="InterPro" id="IPR036792">
    <property type="entry name" value="Asp_carbatrfase_reg_C_sf"/>
</dbReference>
<dbReference type="InterPro" id="IPR036793">
    <property type="entry name" value="Asp_carbatrfase_reg_N_sf"/>
</dbReference>
<dbReference type="NCBIfam" id="TIGR00240">
    <property type="entry name" value="ATCase_reg"/>
    <property type="match status" value="1"/>
</dbReference>
<dbReference type="PANTHER" id="PTHR35805">
    <property type="entry name" value="ASPARTATE CARBAMOYLTRANSFERASE REGULATORY CHAIN"/>
    <property type="match status" value="1"/>
</dbReference>
<dbReference type="PANTHER" id="PTHR35805:SF1">
    <property type="entry name" value="ASPARTATE CARBAMOYLTRANSFERASE REGULATORY CHAIN"/>
    <property type="match status" value="1"/>
</dbReference>
<dbReference type="Pfam" id="PF01948">
    <property type="entry name" value="PyrI"/>
    <property type="match status" value="1"/>
</dbReference>
<dbReference type="Pfam" id="PF02748">
    <property type="entry name" value="PyrI_C"/>
    <property type="match status" value="1"/>
</dbReference>
<dbReference type="SUPFAM" id="SSF57825">
    <property type="entry name" value="Aspartate carbamoyltransferase, Regulatory-chain, C-terminal domain"/>
    <property type="match status" value="1"/>
</dbReference>
<dbReference type="SUPFAM" id="SSF54893">
    <property type="entry name" value="Aspartate carbamoyltransferase, Regulatory-chain, N-terminal domain"/>
    <property type="match status" value="1"/>
</dbReference>
<comment type="function">
    <text evidence="1">Involved in allosteric regulation of aspartate carbamoyltransferase.</text>
</comment>
<comment type="cofactor">
    <cofactor evidence="1">
        <name>Zn(2+)</name>
        <dbReference type="ChEBI" id="CHEBI:29105"/>
    </cofactor>
    <text evidence="1">Binds 1 zinc ion per subunit.</text>
</comment>
<comment type="subunit">
    <text evidence="1">Contains catalytic and regulatory chains.</text>
</comment>
<comment type="similarity">
    <text evidence="1">Belongs to the PyrI family.</text>
</comment>
<name>PYRI_PROMH</name>
<gene>
    <name evidence="1" type="primary">pyrI</name>
    <name type="ordered locus">PMI3454</name>
</gene>
<protein>
    <recommendedName>
        <fullName evidence="1">Aspartate carbamoyltransferase regulatory chain</fullName>
    </recommendedName>
</protein>
<keyword id="KW-0479">Metal-binding</keyword>
<keyword id="KW-0665">Pyrimidine biosynthesis</keyword>
<keyword id="KW-1185">Reference proteome</keyword>
<keyword id="KW-0862">Zinc</keyword>
<evidence type="ECO:0000255" key="1">
    <source>
        <dbReference type="HAMAP-Rule" id="MF_00002"/>
    </source>
</evidence>